<keyword id="KW-1003">Cell membrane</keyword>
<keyword id="KW-0963">Cytoplasm</keyword>
<keyword id="KW-0333">Golgi apparatus</keyword>
<keyword id="KW-0472">Membrane</keyword>
<keyword id="KW-0539">Nucleus</keyword>
<keyword id="KW-0597">Phosphoprotein</keyword>
<keyword id="KW-1185">Reference proteome</keyword>
<sequence>MGLETEKADVQLFMDDDSYSHHSGLEYADPEKFADSGQDRDPHRLNSHLKLGFEDVIAEPVTTHSFDKVWICSHALFEISKYVMYKFLTVFLAIPLAFIAGILFATLSCLHIWILMPFVKTCLMVLPSVQTIWKSVTDVIIAPLCTSVGRCFSSVSLQLSQD</sequence>
<proteinExistence type="inferred from homology"/>
<feature type="chain" id="PRO_0000251908" description="Caveolin-2">
    <location>
        <begin position="1"/>
        <end position="162"/>
    </location>
</feature>
<feature type="topological domain" description="Cytoplasmic" evidence="4">
    <location>
        <begin position="1"/>
        <end position="86"/>
    </location>
</feature>
<feature type="intramembrane region" description="Helical" evidence="4">
    <location>
        <begin position="87"/>
        <end position="107"/>
    </location>
</feature>
<feature type="topological domain" description="Cytoplasmic" evidence="4">
    <location>
        <begin position="108"/>
        <end position="162"/>
    </location>
</feature>
<feature type="modified residue" description="Phosphotyrosine; by SRC" evidence="2">
    <location>
        <position position="19"/>
    </location>
</feature>
<feature type="modified residue" description="Phosphoserine" evidence="3">
    <location>
        <position position="20"/>
    </location>
</feature>
<feature type="modified residue" description="Phosphoserine" evidence="2">
    <location>
        <position position="23"/>
    </location>
</feature>
<feature type="modified residue" description="Phosphotyrosine; by SRC" evidence="2">
    <location>
        <position position="27"/>
    </location>
</feature>
<feature type="modified residue" description="Phosphoserine" evidence="2">
    <location>
        <position position="36"/>
    </location>
</feature>
<protein>
    <recommendedName>
        <fullName>Caveolin-2</fullName>
    </recommendedName>
</protein>
<accession>Q2IBF3</accession>
<name>CAV2_GORGO</name>
<gene>
    <name type="primary">CAV2</name>
</gene>
<comment type="function">
    <text evidence="1">May act as a scaffolding protein within caveolar membranes. Interacts directly with G-protein alpha subunits and can functionally regulate their activity. Acts as an accessory protein in conjunction with CAV1 in targeting to lipid rafts and driving caveolae formation. The Ser-36 phosphorylated form has a role in modulating mitosis in endothelial cells. Positive regulator of cellular mitogenesis of the MAPK signaling pathway. Required for the insulin-stimulated nuclear translocation and activation of MAPK1 and STAT3, and the subsequent regulation of cell cycle progression (By similarity).</text>
</comment>
<comment type="subunit">
    <text evidence="1">Monomer or homodimer (By similarity). Interacts with CAV1; the interaction forms a stable heterooligomeric complex that is required for targeting to lipid rafts and for caveolae formation. Tyrosine phosphorylated forms do not form heterooligomers with the Tyr-19-phosphorylated form existing as a monomer or dimer, and the Tyr-27-form as a monomer only. Interacts (tyrosine phosphorylated form) with the SH2 domain-containing proteins, RASA1, NCK1 and SRC. Interacts (tyrosine phosphorylated form) with INSR, the interaction (Tyr-27-phosphorylated form) is increased on insulin stimulation. Interacts (Tyr-19 phosphorylated form) with MAPK1 (phosphorylated form); the interaction, promoted by insulin, leads to nuclear location and MAPK1 activation. Interacts with STAT3; the interaction is increased on insulin-induced tyrosine phosphorylation leading to STAT activation (By similarity).</text>
</comment>
<comment type="subcellular location">
    <subcellularLocation>
        <location evidence="1">Nucleus</location>
    </subcellularLocation>
    <subcellularLocation>
        <location evidence="1">Cytoplasm</location>
    </subcellularLocation>
    <subcellularLocation>
        <location>Golgi apparatus membrane</location>
        <topology>Peripheral membrane protein</topology>
    </subcellularLocation>
    <subcellularLocation>
        <location>Cell membrane</location>
        <topology>Peripheral membrane protein</topology>
    </subcellularLocation>
    <subcellularLocation>
        <location>Membrane</location>
        <location>Caveola</location>
        <topology>Peripheral membrane protein</topology>
    </subcellularLocation>
    <text evidence="1">Potential hairpin-like structure in the membrane. Membrane protein of caveolae. Tyr-19-phosphorylated form is enriched at sites of cell-cell contact and is translocated to the nucleus in complex with MAPK1 in response to insulin (By similarity). Tyr-27-phosphorylated form is located both in the cytoplasm and plasma membrane. CAV1-mediated Ser-23-phosphorylated form locates to the plasma membrane. Ser-36-phosphorylated form resides in intracellular compartments.</text>
</comment>
<comment type="PTM">
    <text evidence="1">Phosphorylated on serine and tyrosine residues. CAV1 promotes phosphorylation on Ser-23 which then targets the complex to the plasma membrane, lipid rafts and caveolae. Phosphorylation on Ser-36 appears to modulate mitosis in endothelial cells (By similarity). Phosphorylation on both Tyr-19 and Tyr-27 is required for insulin-induced 'Ser-727' phosphorylation of STAT3 and its activation. Phosphorylation on Tyr-19 is required for insulin-induced phosphorylation of MAPK1 and DNA binding of STAT3. Tyrosine phosphorylation is induced by both EGF and insulin (By. similarity).</text>
</comment>
<comment type="similarity">
    <text evidence="5">Belongs to the caveolin family.</text>
</comment>
<evidence type="ECO:0000250" key="1"/>
<evidence type="ECO:0000250" key="2">
    <source>
        <dbReference type="UniProtKB" id="P51636"/>
    </source>
</evidence>
<evidence type="ECO:0000250" key="3">
    <source>
        <dbReference type="UniProtKB" id="Q9WVC3"/>
    </source>
</evidence>
<evidence type="ECO:0000255" key="4"/>
<evidence type="ECO:0000305" key="5"/>
<reference key="1">
    <citation type="submission" date="2006-01" db="EMBL/GenBank/DDBJ databases">
        <title>NISC comparative sequencing initiative.</title>
        <authorList>
            <person name="Antonellis A."/>
            <person name="Ayele K."/>
            <person name="Benjamin B."/>
            <person name="Blakesley R.W."/>
            <person name="Boakye A."/>
            <person name="Bouffard G.G."/>
            <person name="Brinkley C."/>
            <person name="Brooks S."/>
            <person name="Chu G."/>
            <person name="Coleman H."/>
            <person name="Engle J."/>
            <person name="Gestole M."/>
            <person name="Greene A."/>
            <person name="Guan X."/>
            <person name="Gupta J."/>
            <person name="Haghighi P."/>
            <person name="Han J."/>
            <person name="Hansen N."/>
            <person name="Ho S.-L."/>
            <person name="Hu P."/>
            <person name="Hunter G."/>
            <person name="Hurle B."/>
            <person name="Idol J.R."/>
            <person name="Kwong P."/>
            <person name="Laric P."/>
            <person name="Larson S."/>
            <person name="Lee-Lin S.-Q."/>
            <person name="Legaspi R."/>
            <person name="Madden M."/>
            <person name="Maduro Q.L."/>
            <person name="Maduro V.B."/>
            <person name="Margulies E.H."/>
            <person name="Masiello C."/>
            <person name="Maskeri B."/>
            <person name="McDowell J."/>
            <person name="Mojidi H.A."/>
            <person name="Mullikin J.C."/>
            <person name="Oestreicher J.S."/>
            <person name="Park M."/>
            <person name="Portnoy M.E."/>
            <person name="Prasad A."/>
            <person name="Puri O."/>
            <person name="Reddix-Dugue N."/>
            <person name="Schandler K."/>
            <person name="Schueler M.G."/>
            <person name="Sison C."/>
            <person name="Stantripop S."/>
            <person name="Stephen E."/>
            <person name="Taye A."/>
            <person name="Thomas J.W."/>
            <person name="Thomas P.J."/>
            <person name="Tsipouri V."/>
            <person name="Ung L."/>
            <person name="Vogt J.L."/>
            <person name="Wetherby K.D."/>
            <person name="Young A."/>
            <person name="Green E.D."/>
        </authorList>
    </citation>
    <scope>NUCLEOTIDE SEQUENCE [LARGE SCALE GENOMIC DNA]</scope>
</reference>
<dbReference type="EMBL" id="DP000025">
    <property type="protein sequence ID" value="ABC87447.1"/>
    <property type="molecule type" value="Genomic_DNA"/>
</dbReference>
<dbReference type="RefSeq" id="XP_004046134.1">
    <property type="nucleotide sequence ID" value="XM_004046086.5"/>
</dbReference>
<dbReference type="SMR" id="Q2IBF3"/>
<dbReference type="FunCoup" id="Q2IBF3">
    <property type="interactions" value="884"/>
</dbReference>
<dbReference type="STRING" id="9593.ENSGGOP00000014709"/>
<dbReference type="Ensembl" id="ENSGGOT00000015124.3">
    <property type="protein sequence ID" value="ENSGGOP00000014709.2"/>
    <property type="gene ID" value="ENSGGOG00000015074.3"/>
</dbReference>
<dbReference type="GeneID" id="101124237"/>
<dbReference type="KEGG" id="ggo:101124237"/>
<dbReference type="CTD" id="858"/>
<dbReference type="eggNOG" id="ENOG502RZYX">
    <property type="taxonomic scope" value="Eukaryota"/>
</dbReference>
<dbReference type="GeneTree" id="ENSGT00950000183006"/>
<dbReference type="HOGENOM" id="CLU_102582_2_0_1"/>
<dbReference type="InParanoid" id="Q2IBF3"/>
<dbReference type="OMA" id="TRIFMDD"/>
<dbReference type="OrthoDB" id="3599at9604"/>
<dbReference type="Proteomes" id="UP000001519">
    <property type="component" value="Chromosome 7"/>
</dbReference>
<dbReference type="Bgee" id="ENSGGOG00000015074">
    <property type="expression patterns" value="Expressed in heart and 5 other cell types or tissues"/>
</dbReference>
<dbReference type="GO" id="GO:0002080">
    <property type="term" value="C:acrosomal membrane"/>
    <property type="evidence" value="ECO:0007669"/>
    <property type="project" value="Ensembl"/>
</dbReference>
<dbReference type="GO" id="GO:0005901">
    <property type="term" value="C:caveola"/>
    <property type="evidence" value="ECO:0000250"/>
    <property type="project" value="UniProtKB"/>
</dbReference>
<dbReference type="GO" id="GO:0002095">
    <property type="term" value="C:caveolar macromolecular signaling complex"/>
    <property type="evidence" value="ECO:0007669"/>
    <property type="project" value="Ensembl"/>
</dbReference>
<dbReference type="GO" id="GO:0031410">
    <property type="term" value="C:cytoplasmic vesicle"/>
    <property type="evidence" value="ECO:0000318"/>
    <property type="project" value="GO_Central"/>
</dbReference>
<dbReference type="GO" id="GO:0005925">
    <property type="term" value="C:focal adhesion"/>
    <property type="evidence" value="ECO:0007669"/>
    <property type="project" value="Ensembl"/>
</dbReference>
<dbReference type="GO" id="GO:0005794">
    <property type="term" value="C:Golgi apparatus"/>
    <property type="evidence" value="ECO:0000318"/>
    <property type="project" value="GO_Central"/>
</dbReference>
<dbReference type="GO" id="GO:0000139">
    <property type="term" value="C:Golgi membrane"/>
    <property type="evidence" value="ECO:0007669"/>
    <property type="project" value="UniProtKB-SubCell"/>
</dbReference>
<dbReference type="GO" id="GO:0005634">
    <property type="term" value="C:nucleus"/>
    <property type="evidence" value="ECO:0007669"/>
    <property type="project" value="UniProtKB-SubCell"/>
</dbReference>
<dbReference type="GO" id="GO:0048471">
    <property type="term" value="C:perinuclear region of cytoplasm"/>
    <property type="evidence" value="ECO:0000250"/>
    <property type="project" value="UniProtKB"/>
</dbReference>
<dbReference type="GO" id="GO:0044853">
    <property type="term" value="C:plasma membrane raft"/>
    <property type="evidence" value="ECO:0000250"/>
    <property type="project" value="UniProtKB"/>
</dbReference>
<dbReference type="GO" id="GO:0030133">
    <property type="term" value="C:transport vesicle"/>
    <property type="evidence" value="ECO:0007669"/>
    <property type="project" value="Ensembl"/>
</dbReference>
<dbReference type="GO" id="GO:0031748">
    <property type="term" value="F:D1 dopamine receptor binding"/>
    <property type="evidence" value="ECO:0000250"/>
    <property type="project" value="UniProtKB"/>
</dbReference>
<dbReference type="GO" id="GO:0060090">
    <property type="term" value="F:molecular adaptor activity"/>
    <property type="evidence" value="ECO:0000318"/>
    <property type="project" value="GO_Central"/>
</dbReference>
<dbReference type="GO" id="GO:0046982">
    <property type="term" value="F:protein heterodimerization activity"/>
    <property type="evidence" value="ECO:0007669"/>
    <property type="project" value="Ensembl"/>
</dbReference>
<dbReference type="GO" id="GO:0042803">
    <property type="term" value="F:protein homodimerization activity"/>
    <property type="evidence" value="ECO:0007669"/>
    <property type="project" value="Ensembl"/>
</dbReference>
<dbReference type="GO" id="GO:0019901">
    <property type="term" value="F:protein kinase binding"/>
    <property type="evidence" value="ECO:0000318"/>
    <property type="project" value="GO_Central"/>
</dbReference>
<dbReference type="GO" id="GO:0030674">
    <property type="term" value="F:protein-macromolecule adaptor activity"/>
    <property type="evidence" value="ECO:0007669"/>
    <property type="project" value="Ensembl"/>
</dbReference>
<dbReference type="GO" id="GO:0097110">
    <property type="term" value="F:scaffold protein binding"/>
    <property type="evidence" value="ECO:0007669"/>
    <property type="project" value="Ensembl"/>
</dbReference>
<dbReference type="GO" id="GO:0071711">
    <property type="term" value="P:basement membrane organization"/>
    <property type="evidence" value="ECO:0007669"/>
    <property type="project" value="Ensembl"/>
</dbReference>
<dbReference type="GO" id="GO:0070836">
    <property type="term" value="P:caveola assembly"/>
    <property type="evidence" value="ECO:0000250"/>
    <property type="project" value="UniProtKB"/>
</dbReference>
<dbReference type="GO" id="GO:0030154">
    <property type="term" value="P:cell differentiation"/>
    <property type="evidence" value="ECO:0000318"/>
    <property type="project" value="GO_Central"/>
</dbReference>
<dbReference type="GO" id="GO:0007029">
    <property type="term" value="P:endoplasmic reticulum organization"/>
    <property type="evidence" value="ECO:0000250"/>
    <property type="project" value="UniProtKB"/>
</dbReference>
<dbReference type="GO" id="GO:0001935">
    <property type="term" value="P:endothelial cell proliferation"/>
    <property type="evidence" value="ECO:0007669"/>
    <property type="project" value="Ensembl"/>
</dbReference>
<dbReference type="GO" id="GO:0008286">
    <property type="term" value="P:insulin receptor signaling pathway"/>
    <property type="evidence" value="ECO:0000318"/>
    <property type="project" value="GO_Central"/>
</dbReference>
<dbReference type="GO" id="GO:0007005">
    <property type="term" value="P:mitochondrion organization"/>
    <property type="evidence" value="ECO:0000250"/>
    <property type="project" value="UniProtKB"/>
</dbReference>
<dbReference type="GO" id="GO:0001937">
    <property type="term" value="P:negative regulation of endothelial cell proliferation"/>
    <property type="evidence" value="ECO:0000250"/>
    <property type="project" value="UniProtKB"/>
</dbReference>
<dbReference type="GO" id="GO:0014859">
    <property type="term" value="P:negative regulation of skeletal muscle cell proliferation"/>
    <property type="evidence" value="ECO:0007669"/>
    <property type="project" value="Ensembl"/>
</dbReference>
<dbReference type="GO" id="GO:0030512">
    <property type="term" value="P:negative regulation of transforming growth factor beta receptor signaling pathway"/>
    <property type="evidence" value="ECO:0007669"/>
    <property type="project" value="Ensembl"/>
</dbReference>
<dbReference type="GO" id="GO:0044794">
    <property type="term" value="P:positive regulation by host of viral process"/>
    <property type="evidence" value="ECO:0007669"/>
    <property type="project" value="Ensembl"/>
</dbReference>
<dbReference type="GO" id="GO:0060161">
    <property type="term" value="P:positive regulation of dopamine receptor signaling pathway"/>
    <property type="evidence" value="ECO:0000250"/>
    <property type="project" value="UniProtKB"/>
</dbReference>
<dbReference type="GO" id="GO:0001938">
    <property type="term" value="P:positive regulation of endothelial cell proliferation"/>
    <property type="evidence" value="ECO:0007669"/>
    <property type="project" value="Ensembl"/>
</dbReference>
<dbReference type="GO" id="GO:0043410">
    <property type="term" value="P:positive regulation of MAPK cascade"/>
    <property type="evidence" value="ECO:0007669"/>
    <property type="project" value="Ensembl"/>
</dbReference>
<dbReference type="GO" id="GO:0019065">
    <property type="term" value="P:receptor-mediated endocytosis of virus by host cell"/>
    <property type="evidence" value="ECO:0007669"/>
    <property type="project" value="Ensembl"/>
</dbReference>
<dbReference type="GO" id="GO:0051480">
    <property type="term" value="P:regulation of cytosolic calcium ion concentration"/>
    <property type="evidence" value="ECO:0000318"/>
    <property type="project" value="GO_Central"/>
</dbReference>
<dbReference type="GO" id="GO:0007088">
    <property type="term" value="P:regulation of mitotic nuclear division"/>
    <property type="evidence" value="ECO:0007669"/>
    <property type="project" value="Ensembl"/>
</dbReference>
<dbReference type="GO" id="GO:0014856">
    <property type="term" value="P:skeletal muscle cell proliferation"/>
    <property type="evidence" value="ECO:0007669"/>
    <property type="project" value="Ensembl"/>
</dbReference>
<dbReference type="GO" id="GO:0048741">
    <property type="term" value="P:skeletal muscle fiber development"/>
    <property type="evidence" value="ECO:0000250"/>
    <property type="project" value="UniProtKB"/>
</dbReference>
<dbReference type="GO" id="GO:0007179">
    <property type="term" value="P:transforming growth factor beta receptor signaling pathway"/>
    <property type="evidence" value="ECO:0007669"/>
    <property type="project" value="Ensembl"/>
</dbReference>
<dbReference type="GO" id="GO:0048278">
    <property type="term" value="P:vesicle docking"/>
    <property type="evidence" value="ECO:0000250"/>
    <property type="project" value="UniProtKB"/>
</dbReference>
<dbReference type="GO" id="GO:0006906">
    <property type="term" value="P:vesicle fusion"/>
    <property type="evidence" value="ECO:0000250"/>
    <property type="project" value="UniProtKB"/>
</dbReference>
<dbReference type="GO" id="GO:0019076">
    <property type="term" value="P:viral release from host cell"/>
    <property type="evidence" value="ECO:0007669"/>
    <property type="project" value="Ensembl"/>
</dbReference>
<dbReference type="InterPro" id="IPR001612">
    <property type="entry name" value="Caveolin"/>
</dbReference>
<dbReference type="InterPro" id="IPR018361">
    <property type="entry name" value="Caveolin_CS"/>
</dbReference>
<dbReference type="PANTHER" id="PTHR10844">
    <property type="entry name" value="CAVEOLIN"/>
    <property type="match status" value="1"/>
</dbReference>
<dbReference type="PANTHER" id="PTHR10844:SF3">
    <property type="entry name" value="CAVEOLIN-2"/>
    <property type="match status" value="1"/>
</dbReference>
<dbReference type="Pfam" id="PF01146">
    <property type="entry name" value="Caveolin"/>
    <property type="match status" value="1"/>
</dbReference>
<dbReference type="PROSITE" id="PS01210">
    <property type="entry name" value="CAVEOLIN"/>
    <property type="match status" value="1"/>
</dbReference>
<organism>
    <name type="scientific">Gorilla gorilla gorilla</name>
    <name type="common">Western lowland gorilla</name>
    <dbReference type="NCBI Taxonomy" id="9595"/>
    <lineage>
        <taxon>Eukaryota</taxon>
        <taxon>Metazoa</taxon>
        <taxon>Chordata</taxon>
        <taxon>Craniata</taxon>
        <taxon>Vertebrata</taxon>
        <taxon>Euteleostomi</taxon>
        <taxon>Mammalia</taxon>
        <taxon>Eutheria</taxon>
        <taxon>Euarchontoglires</taxon>
        <taxon>Primates</taxon>
        <taxon>Haplorrhini</taxon>
        <taxon>Catarrhini</taxon>
        <taxon>Hominidae</taxon>
        <taxon>Gorilla</taxon>
    </lineage>
</organism>